<name>TMM89_HUMAN</name>
<sequence length="159" mass="17572">MLHVLASLPLLLLLVTSASTHAWSRPLWYQVGLDLQPWGCQPKSVEGCRGGLSCPGYWLGPGASRIYPVAAVMITTTMLMICRKILQGRRRSQATKGEHPQVTTEPCGPWKRRAPISDHTLLRGVLHMLDALLVHIEGHLRHLATQRQIQIKGTSTQSG</sequence>
<comment type="interaction">
    <interactant intactId="EBI-13320913">
        <id>A2RUT3</id>
    </interactant>
    <interactant intactId="EBI-1223619">
        <id>P0C0L4</id>
        <label>C4A</label>
    </interactant>
    <organismsDiffer>false</organismsDiffer>
    <experiments>2</experiments>
</comment>
<comment type="subcellular location">
    <subcellularLocation>
        <location evidence="3">Membrane</location>
        <topology evidence="3">Single-pass type I membrane protein</topology>
    </subcellularLocation>
</comment>
<gene>
    <name type="primary">TMEM89</name>
</gene>
<organism>
    <name type="scientific">Homo sapiens</name>
    <name type="common">Human</name>
    <dbReference type="NCBI Taxonomy" id="9606"/>
    <lineage>
        <taxon>Eukaryota</taxon>
        <taxon>Metazoa</taxon>
        <taxon>Chordata</taxon>
        <taxon>Craniata</taxon>
        <taxon>Vertebrata</taxon>
        <taxon>Euteleostomi</taxon>
        <taxon>Mammalia</taxon>
        <taxon>Eutheria</taxon>
        <taxon>Euarchontoglires</taxon>
        <taxon>Primates</taxon>
        <taxon>Haplorrhini</taxon>
        <taxon>Catarrhini</taxon>
        <taxon>Hominidae</taxon>
        <taxon>Homo</taxon>
    </lineage>
</organism>
<feature type="signal peptide" evidence="1">
    <location>
        <begin position="1"/>
        <end position="24"/>
    </location>
</feature>
<feature type="chain" id="PRO_0000290067" description="Transmembrane protein 89">
    <location>
        <begin position="25"/>
        <end position="159"/>
    </location>
</feature>
<feature type="topological domain" description="Extracellular" evidence="1">
    <location>
        <begin position="25"/>
        <end position="63"/>
    </location>
</feature>
<feature type="transmembrane region" description="Helical" evidence="1">
    <location>
        <begin position="64"/>
        <end position="86"/>
    </location>
</feature>
<feature type="topological domain" description="Cytoplasmic" evidence="1">
    <location>
        <begin position="87"/>
        <end position="159"/>
    </location>
</feature>
<feature type="region of interest" description="Disordered" evidence="2">
    <location>
        <begin position="91"/>
        <end position="110"/>
    </location>
</feature>
<feature type="sequence variant" id="VAR_051450" description="In dbSNP:rs9834639.">
    <original>P</original>
    <variation>T</variation>
    <location>
        <position position="61"/>
    </location>
</feature>
<protein>
    <recommendedName>
        <fullName>Transmembrane protein 89</fullName>
    </recommendedName>
</protein>
<dbReference type="EMBL" id="BC133034">
    <property type="protein sequence ID" value="AAI33035.1"/>
    <property type="molecule type" value="mRNA"/>
</dbReference>
<dbReference type="EMBL" id="BC133036">
    <property type="protein sequence ID" value="AAI33037.1"/>
    <property type="molecule type" value="mRNA"/>
</dbReference>
<dbReference type="CCDS" id="CCDS33751.1"/>
<dbReference type="RefSeq" id="NP_001008270.1">
    <property type="nucleotide sequence ID" value="NM_001008269.3"/>
</dbReference>
<dbReference type="SMR" id="A2RUT3"/>
<dbReference type="BioGRID" id="137028">
    <property type="interactions" value="2"/>
</dbReference>
<dbReference type="FunCoup" id="A2RUT3">
    <property type="interactions" value="76"/>
</dbReference>
<dbReference type="IntAct" id="A2RUT3">
    <property type="interactions" value="1"/>
</dbReference>
<dbReference type="STRING" id="9606.ENSP00000329557"/>
<dbReference type="PhosphoSitePlus" id="A2RUT3"/>
<dbReference type="BioMuta" id="TMEM89"/>
<dbReference type="MassIVE" id="A2RUT3"/>
<dbReference type="PaxDb" id="9606-ENSP00000329557"/>
<dbReference type="PeptideAtlas" id="A2RUT3"/>
<dbReference type="ProteomicsDB" id="524"/>
<dbReference type="Antibodypedia" id="66345">
    <property type="antibodies" value="6 antibodies from 6 providers"/>
</dbReference>
<dbReference type="DNASU" id="440955"/>
<dbReference type="Ensembl" id="ENST00000330862.4">
    <property type="protein sequence ID" value="ENSP00000329557.3"/>
    <property type="gene ID" value="ENSG00000183396.4"/>
</dbReference>
<dbReference type="GeneID" id="440955"/>
<dbReference type="KEGG" id="hsa:440955"/>
<dbReference type="MANE-Select" id="ENST00000330862.4">
    <property type="protein sequence ID" value="ENSP00000329557.3"/>
    <property type="RefSeq nucleotide sequence ID" value="NM_001008269.3"/>
    <property type="RefSeq protein sequence ID" value="NP_001008270.1"/>
</dbReference>
<dbReference type="UCSC" id="uc011bbo.3">
    <property type="organism name" value="human"/>
</dbReference>
<dbReference type="AGR" id="HGNC:32372"/>
<dbReference type="CTD" id="440955"/>
<dbReference type="DisGeNET" id="440955"/>
<dbReference type="GeneCards" id="TMEM89"/>
<dbReference type="HGNC" id="HGNC:32372">
    <property type="gene designation" value="TMEM89"/>
</dbReference>
<dbReference type="HPA" id="ENSG00000183396">
    <property type="expression patterns" value="Tissue enriched (testis)"/>
</dbReference>
<dbReference type="neXtProt" id="NX_A2RUT3"/>
<dbReference type="PharmGKB" id="PA142670742"/>
<dbReference type="VEuPathDB" id="HostDB:ENSG00000183396"/>
<dbReference type="eggNOG" id="ENOG502TDUC">
    <property type="taxonomic scope" value="Eukaryota"/>
</dbReference>
<dbReference type="GeneTree" id="ENSGT00390000005336"/>
<dbReference type="HOGENOM" id="CLU_1859782_0_0_1"/>
<dbReference type="InParanoid" id="A2RUT3"/>
<dbReference type="OMA" id="CPGHWMG"/>
<dbReference type="OrthoDB" id="9833607at2759"/>
<dbReference type="PAN-GO" id="A2RUT3">
    <property type="GO annotations" value="0 GO annotations based on evolutionary models"/>
</dbReference>
<dbReference type="PhylomeDB" id="A2RUT3"/>
<dbReference type="TreeFam" id="TF336927"/>
<dbReference type="PathwayCommons" id="A2RUT3"/>
<dbReference type="SignaLink" id="A2RUT3"/>
<dbReference type="BioGRID-ORCS" id="440955">
    <property type="hits" value="9 hits in 1140 CRISPR screens"/>
</dbReference>
<dbReference type="GenomeRNAi" id="440955"/>
<dbReference type="Pharos" id="A2RUT3">
    <property type="development level" value="Tdark"/>
</dbReference>
<dbReference type="PRO" id="PR:A2RUT3"/>
<dbReference type="Proteomes" id="UP000005640">
    <property type="component" value="Chromosome 3"/>
</dbReference>
<dbReference type="RNAct" id="A2RUT3">
    <property type="molecule type" value="protein"/>
</dbReference>
<dbReference type="Bgee" id="ENSG00000183396">
    <property type="expression patterns" value="Expressed in male germ line stem cell (sensu Vertebrata) in testis and 72 other cell types or tissues"/>
</dbReference>
<dbReference type="GO" id="GO:0016020">
    <property type="term" value="C:membrane"/>
    <property type="evidence" value="ECO:0007669"/>
    <property type="project" value="UniProtKB-SubCell"/>
</dbReference>
<dbReference type="GO" id="GO:0005634">
    <property type="term" value="C:nucleus"/>
    <property type="evidence" value="ECO:0007005"/>
    <property type="project" value="UniProtKB"/>
</dbReference>
<dbReference type="InterPro" id="IPR028069">
    <property type="entry name" value="TMEM89"/>
</dbReference>
<dbReference type="PANTHER" id="PTHR37869">
    <property type="entry name" value="TRANSMEMBRANE PROTEIN 89"/>
    <property type="match status" value="1"/>
</dbReference>
<dbReference type="PANTHER" id="PTHR37869:SF1">
    <property type="entry name" value="TRANSMEMBRANE PROTEIN 89"/>
    <property type="match status" value="1"/>
</dbReference>
<dbReference type="Pfam" id="PF15098">
    <property type="entry name" value="TMEM89"/>
    <property type="match status" value="1"/>
</dbReference>
<proteinExistence type="evidence at protein level"/>
<keyword id="KW-0472">Membrane</keyword>
<keyword id="KW-1267">Proteomics identification</keyword>
<keyword id="KW-1185">Reference proteome</keyword>
<keyword id="KW-0732">Signal</keyword>
<keyword id="KW-0812">Transmembrane</keyword>
<keyword id="KW-1133">Transmembrane helix</keyword>
<evidence type="ECO:0000255" key="1"/>
<evidence type="ECO:0000256" key="2">
    <source>
        <dbReference type="SAM" id="MobiDB-lite"/>
    </source>
</evidence>
<evidence type="ECO:0000305" key="3"/>
<accession>A2RUT3</accession>
<reference key="1">
    <citation type="journal article" date="2004" name="Genome Res.">
        <title>The status, quality, and expansion of the NIH full-length cDNA project: the Mammalian Gene Collection (MGC).</title>
        <authorList>
            <consortium name="The MGC Project Team"/>
        </authorList>
    </citation>
    <scope>NUCLEOTIDE SEQUENCE [LARGE SCALE MRNA]</scope>
</reference>